<name>P2C59_ORYSJ</name>
<evidence type="ECO:0000250" key="1"/>
<evidence type="ECO:0000255" key="2"/>
<evidence type="ECO:0000255" key="3">
    <source>
        <dbReference type="PROSITE-ProRule" id="PRU01082"/>
    </source>
</evidence>
<evidence type="ECO:0000305" key="4"/>
<organism>
    <name type="scientific">Oryza sativa subsp. japonica</name>
    <name type="common">Rice</name>
    <dbReference type="NCBI Taxonomy" id="39947"/>
    <lineage>
        <taxon>Eukaryota</taxon>
        <taxon>Viridiplantae</taxon>
        <taxon>Streptophyta</taxon>
        <taxon>Embryophyta</taxon>
        <taxon>Tracheophyta</taxon>
        <taxon>Spermatophyta</taxon>
        <taxon>Magnoliopsida</taxon>
        <taxon>Liliopsida</taxon>
        <taxon>Poales</taxon>
        <taxon>Poaceae</taxon>
        <taxon>BOP clade</taxon>
        <taxon>Oryzoideae</taxon>
        <taxon>Oryzeae</taxon>
        <taxon>Oryzinae</taxon>
        <taxon>Oryza</taxon>
        <taxon>Oryza sativa</taxon>
    </lineage>
</organism>
<protein>
    <recommendedName>
        <fullName>Probable protein phosphatase 2C 59</fullName>
        <shortName>OsPP2C59</shortName>
        <ecNumber>3.1.3.16</ecNumber>
    </recommendedName>
</protein>
<proteinExistence type="evidence at transcript level"/>
<feature type="signal peptide" evidence="2">
    <location>
        <begin position="1"/>
        <end position="24"/>
    </location>
</feature>
<feature type="chain" id="PRO_0000363306" description="Probable protein phosphatase 2C 59">
    <location>
        <begin position="25"/>
        <end position="327"/>
    </location>
</feature>
<feature type="domain" description="PPM-type phosphatase" evidence="3">
    <location>
        <begin position="64"/>
        <end position="310"/>
    </location>
</feature>
<feature type="binding site" evidence="1">
    <location>
        <position position="100"/>
    </location>
    <ligand>
        <name>Mn(2+)</name>
        <dbReference type="ChEBI" id="CHEBI:29035"/>
        <label>1</label>
    </ligand>
</feature>
<feature type="binding site" evidence="1">
    <location>
        <position position="100"/>
    </location>
    <ligand>
        <name>Mn(2+)</name>
        <dbReference type="ChEBI" id="CHEBI:29035"/>
        <label>2</label>
    </ligand>
</feature>
<feature type="binding site" evidence="1">
    <location>
        <position position="101"/>
    </location>
    <ligand>
        <name>Mn(2+)</name>
        <dbReference type="ChEBI" id="CHEBI:29035"/>
        <label>1</label>
    </ligand>
</feature>
<feature type="binding site" evidence="1">
    <location>
        <position position="262"/>
    </location>
    <ligand>
        <name>Mn(2+)</name>
        <dbReference type="ChEBI" id="CHEBI:29035"/>
        <label>2</label>
    </ligand>
</feature>
<feature type="binding site" evidence="1">
    <location>
        <position position="301"/>
    </location>
    <ligand>
        <name>Mn(2+)</name>
        <dbReference type="ChEBI" id="CHEBI:29035"/>
        <label>2</label>
    </ligand>
</feature>
<accession>Q5Z6F5</accession>
<accession>Q0D9U5</accession>
<reference key="1">
    <citation type="journal article" date="2005" name="Nature">
        <title>The map-based sequence of the rice genome.</title>
        <authorList>
            <consortium name="International rice genome sequencing project (IRGSP)"/>
        </authorList>
    </citation>
    <scope>NUCLEOTIDE SEQUENCE [LARGE SCALE GENOMIC DNA]</scope>
    <source>
        <strain>cv. Nipponbare</strain>
    </source>
</reference>
<reference key="2">
    <citation type="journal article" date="2008" name="Nucleic Acids Res.">
        <title>The rice annotation project database (RAP-DB): 2008 update.</title>
        <authorList>
            <consortium name="The rice annotation project (RAP)"/>
        </authorList>
    </citation>
    <scope>GENOME REANNOTATION</scope>
    <source>
        <strain>cv. Nipponbare</strain>
    </source>
</reference>
<reference key="3">
    <citation type="journal article" date="2013" name="Rice">
        <title>Improvement of the Oryza sativa Nipponbare reference genome using next generation sequence and optical map data.</title>
        <authorList>
            <person name="Kawahara Y."/>
            <person name="de la Bastide M."/>
            <person name="Hamilton J.P."/>
            <person name="Kanamori H."/>
            <person name="McCombie W.R."/>
            <person name="Ouyang S."/>
            <person name="Schwartz D.C."/>
            <person name="Tanaka T."/>
            <person name="Wu J."/>
            <person name="Zhou S."/>
            <person name="Childs K.L."/>
            <person name="Davidson R.M."/>
            <person name="Lin H."/>
            <person name="Quesada-Ocampo L."/>
            <person name="Vaillancourt B."/>
            <person name="Sakai H."/>
            <person name="Lee S.S."/>
            <person name="Kim J."/>
            <person name="Numa H."/>
            <person name="Itoh T."/>
            <person name="Buell C.R."/>
            <person name="Matsumoto T."/>
        </authorList>
    </citation>
    <scope>GENOME REANNOTATION</scope>
    <source>
        <strain>cv. Nipponbare</strain>
    </source>
</reference>
<reference key="4">
    <citation type="journal article" date="2005" name="PLoS Biol.">
        <title>The genomes of Oryza sativa: a history of duplications.</title>
        <authorList>
            <person name="Yu J."/>
            <person name="Wang J."/>
            <person name="Lin W."/>
            <person name="Li S."/>
            <person name="Li H."/>
            <person name="Zhou J."/>
            <person name="Ni P."/>
            <person name="Dong W."/>
            <person name="Hu S."/>
            <person name="Zeng C."/>
            <person name="Zhang J."/>
            <person name="Zhang Y."/>
            <person name="Li R."/>
            <person name="Xu Z."/>
            <person name="Li S."/>
            <person name="Li X."/>
            <person name="Zheng H."/>
            <person name="Cong L."/>
            <person name="Lin L."/>
            <person name="Yin J."/>
            <person name="Geng J."/>
            <person name="Li G."/>
            <person name="Shi J."/>
            <person name="Liu J."/>
            <person name="Lv H."/>
            <person name="Li J."/>
            <person name="Wang J."/>
            <person name="Deng Y."/>
            <person name="Ran L."/>
            <person name="Shi X."/>
            <person name="Wang X."/>
            <person name="Wu Q."/>
            <person name="Li C."/>
            <person name="Ren X."/>
            <person name="Wang J."/>
            <person name="Wang X."/>
            <person name="Li D."/>
            <person name="Liu D."/>
            <person name="Zhang X."/>
            <person name="Ji Z."/>
            <person name="Zhao W."/>
            <person name="Sun Y."/>
            <person name="Zhang Z."/>
            <person name="Bao J."/>
            <person name="Han Y."/>
            <person name="Dong L."/>
            <person name="Ji J."/>
            <person name="Chen P."/>
            <person name="Wu S."/>
            <person name="Liu J."/>
            <person name="Xiao Y."/>
            <person name="Bu D."/>
            <person name="Tan J."/>
            <person name="Yang L."/>
            <person name="Ye C."/>
            <person name="Zhang J."/>
            <person name="Xu J."/>
            <person name="Zhou Y."/>
            <person name="Yu Y."/>
            <person name="Zhang B."/>
            <person name="Zhuang S."/>
            <person name="Wei H."/>
            <person name="Liu B."/>
            <person name="Lei M."/>
            <person name="Yu H."/>
            <person name="Li Y."/>
            <person name="Xu H."/>
            <person name="Wei S."/>
            <person name="He X."/>
            <person name="Fang L."/>
            <person name="Zhang Z."/>
            <person name="Zhang Y."/>
            <person name="Huang X."/>
            <person name="Su Z."/>
            <person name="Tong W."/>
            <person name="Li J."/>
            <person name="Tong Z."/>
            <person name="Li S."/>
            <person name="Ye J."/>
            <person name="Wang L."/>
            <person name="Fang L."/>
            <person name="Lei T."/>
            <person name="Chen C.-S."/>
            <person name="Chen H.-C."/>
            <person name="Xu Z."/>
            <person name="Li H."/>
            <person name="Huang H."/>
            <person name="Zhang F."/>
            <person name="Xu H."/>
            <person name="Li N."/>
            <person name="Zhao C."/>
            <person name="Li S."/>
            <person name="Dong L."/>
            <person name="Huang Y."/>
            <person name="Li L."/>
            <person name="Xi Y."/>
            <person name="Qi Q."/>
            <person name="Li W."/>
            <person name="Zhang B."/>
            <person name="Hu W."/>
            <person name="Zhang Y."/>
            <person name="Tian X."/>
            <person name="Jiao Y."/>
            <person name="Liang X."/>
            <person name="Jin J."/>
            <person name="Gao L."/>
            <person name="Zheng W."/>
            <person name="Hao B."/>
            <person name="Liu S.-M."/>
            <person name="Wang W."/>
            <person name="Yuan L."/>
            <person name="Cao M."/>
            <person name="McDermott J."/>
            <person name="Samudrala R."/>
            <person name="Wang J."/>
            <person name="Wong G.K.-S."/>
            <person name="Yang H."/>
        </authorList>
    </citation>
    <scope>NUCLEOTIDE SEQUENCE [LARGE SCALE GENOMIC DNA]</scope>
    <source>
        <strain>cv. Nipponbare</strain>
    </source>
</reference>
<reference key="5">
    <citation type="journal article" date="2003" name="Science">
        <title>Collection, mapping, and annotation of over 28,000 cDNA clones from japonica rice.</title>
        <authorList>
            <consortium name="The rice full-length cDNA consortium"/>
        </authorList>
    </citation>
    <scope>NUCLEOTIDE SEQUENCE [LARGE SCALE MRNA] OF 2-327</scope>
    <source>
        <strain>cv. Nipponbare</strain>
    </source>
</reference>
<reference key="6">
    <citation type="journal article" date="2008" name="BMC Genomics">
        <title>Genome-wide and expression analysis of protein phosphatase 2C in rice and Arabidopsis.</title>
        <authorList>
            <person name="Xue T."/>
            <person name="Wang D."/>
            <person name="Zhang S."/>
            <person name="Ehlting J."/>
            <person name="Ni F."/>
            <person name="Jacab S."/>
            <person name="Zheng C."/>
            <person name="Zhong Y."/>
        </authorList>
    </citation>
    <scope>GENE FAMILY</scope>
    <scope>NOMENCLATURE</scope>
</reference>
<sequence length="327" mass="34941">MREVLLLGSLVVLALLSLFPCCSCLSQGAEEEEDDGEVRLMGLAGEAAGSPGSGGGFSANGKFSYGYASSPGKRSSMEDFYDTRIDGVDGETVGLFGVFDGHGGARAAEFVKQNLFTNLIKHPKLFSDTKSAIAETYTSTDSELLKAETSHNRDAGSTASTAILVGDRLLVANVGDSRAVICRGGDAIAVSRDHKPDQSDERQRIEDAGGFVMWAGTWRVGGVLAVSRAFGDKLLKQYVVADPEIKEEVVDSSLEFLILASDGLWDVVTNEEAVAMVKPILDSEQAAKKLLQEASQRGSADNITCLVVRFLEQENHLPERPTNDQAS</sequence>
<comment type="catalytic activity">
    <reaction>
        <text>O-phospho-L-seryl-[protein] + H2O = L-seryl-[protein] + phosphate</text>
        <dbReference type="Rhea" id="RHEA:20629"/>
        <dbReference type="Rhea" id="RHEA-COMP:9863"/>
        <dbReference type="Rhea" id="RHEA-COMP:11604"/>
        <dbReference type="ChEBI" id="CHEBI:15377"/>
        <dbReference type="ChEBI" id="CHEBI:29999"/>
        <dbReference type="ChEBI" id="CHEBI:43474"/>
        <dbReference type="ChEBI" id="CHEBI:83421"/>
        <dbReference type="EC" id="3.1.3.16"/>
    </reaction>
</comment>
<comment type="catalytic activity">
    <reaction>
        <text>O-phospho-L-threonyl-[protein] + H2O = L-threonyl-[protein] + phosphate</text>
        <dbReference type="Rhea" id="RHEA:47004"/>
        <dbReference type="Rhea" id="RHEA-COMP:11060"/>
        <dbReference type="Rhea" id="RHEA-COMP:11605"/>
        <dbReference type="ChEBI" id="CHEBI:15377"/>
        <dbReference type="ChEBI" id="CHEBI:30013"/>
        <dbReference type="ChEBI" id="CHEBI:43474"/>
        <dbReference type="ChEBI" id="CHEBI:61977"/>
        <dbReference type="EC" id="3.1.3.16"/>
    </reaction>
</comment>
<comment type="cofactor">
    <cofactor evidence="1">
        <name>Mg(2+)</name>
        <dbReference type="ChEBI" id="CHEBI:18420"/>
    </cofactor>
    <cofactor evidence="1">
        <name>Mn(2+)</name>
        <dbReference type="ChEBI" id="CHEBI:29035"/>
    </cofactor>
    <text evidence="1">Binds 2 magnesium or manganese ions per subunit.</text>
</comment>
<comment type="similarity">
    <text evidence="4">Belongs to the PP2C family.</text>
</comment>
<comment type="sequence caution" evidence="4">
    <conflict type="erroneous initiation">
        <sequence resource="EMBL-CDS" id="BAF20378"/>
    </conflict>
</comment>
<gene>
    <name type="ordered locus">Os06g0698300</name>
    <name type="ordered locus">LOC_Os06g48300</name>
    <name type="ORF">OsJ_021637</name>
    <name type="ORF">P0028E05.39</name>
</gene>
<keyword id="KW-0378">Hydrolase</keyword>
<keyword id="KW-0460">Magnesium</keyword>
<keyword id="KW-0464">Manganese</keyword>
<keyword id="KW-0479">Metal-binding</keyword>
<keyword id="KW-0904">Protein phosphatase</keyword>
<keyword id="KW-1185">Reference proteome</keyword>
<keyword id="KW-0732">Signal</keyword>
<dbReference type="EC" id="3.1.3.16"/>
<dbReference type="EMBL" id="AP005445">
    <property type="protein sequence ID" value="BAD54464.1"/>
    <property type="molecule type" value="Genomic_DNA"/>
</dbReference>
<dbReference type="EMBL" id="AP008212">
    <property type="protein sequence ID" value="BAF20378.1"/>
    <property type="status" value="ALT_INIT"/>
    <property type="molecule type" value="Genomic_DNA"/>
</dbReference>
<dbReference type="EMBL" id="AP014962">
    <property type="status" value="NOT_ANNOTATED_CDS"/>
    <property type="molecule type" value="Genomic_DNA"/>
</dbReference>
<dbReference type="EMBL" id="CM000143">
    <property type="protein sequence ID" value="EAZ38154.1"/>
    <property type="molecule type" value="Genomic_DNA"/>
</dbReference>
<dbReference type="EMBL" id="AK071637">
    <property type="status" value="NOT_ANNOTATED_CDS"/>
    <property type="molecule type" value="mRNA"/>
</dbReference>
<dbReference type="RefSeq" id="XP_015643686.1">
    <property type="nucleotide sequence ID" value="XM_015788200.1"/>
</dbReference>
<dbReference type="SMR" id="Q5Z6F5"/>
<dbReference type="FunCoup" id="Q5Z6F5">
    <property type="interactions" value="321"/>
</dbReference>
<dbReference type="STRING" id="39947.Q5Z6F5"/>
<dbReference type="PaxDb" id="39947-Q5Z6F5"/>
<dbReference type="KEGG" id="dosa:Os06g0698300"/>
<dbReference type="eggNOG" id="KOG0698">
    <property type="taxonomic scope" value="Eukaryota"/>
</dbReference>
<dbReference type="HOGENOM" id="CLU_013173_0_5_1"/>
<dbReference type="InParanoid" id="Q5Z6F5"/>
<dbReference type="OrthoDB" id="10264738at2759"/>
<dbReference type="Proteomes" id="UP000000763">
    <property type="component" value="Chromosome 6"/>
</dbReference>
<dbReference type="Proteomes" id="UP000007752">
    <property type="component" value="Chromosome 6"/>
</dbReference>
<dbReference type="Proteomes" id="UP000059680">
    <property type="component" value="Chromosome 6"/>
</dbReference>
<dbReference type="GO" id="GO:0046872">
    <property type="term" value="F:metal ion binding"/>
    <property type="evidence" value="ECO:0007669"/>
    <property type="project" value="UniProtKB-KW"/>
</dbReference>
<dbReference type="GO" id="GO:0004722">
    <property type="term" value="F:protein serine/threonine phosphatase activity"/>
    <property type="evidence" value="ECO:0000318"/>
    <property type="project" value="GO_Central"/>
</dbReference>
<dbReference type="GO" id="GO:1902531">
    <property type="term" value="P:regulation of intracellular signal transduction"/>
    <property type="evidence" value="ECO:0000318"/>
    <property type="project" value="GO_Central"/>
</dbReference>
<dbReference type="CDD" id="cd00143">
    <property type="entry name" value="PP2Cc"/>
    <property type="match status" value="1"/>
</dbReference>
<dbReference type="FunFam" id="3.60.40.10:FF:000011">
    <property type="entry name" value="probable protein phosphatase 2C 59"/>
    <property type="match status" value="1"/>
</dbReference>
<dbReference type="Gene3D" id="3.60.40.10">
    <property type="entry name" value="PPM-type phosphatase domain"/>
    <property type="match status" value="1"/>
</dbReference>
<dbReference type="InterPro" id="IPR015655">
    <property type="entry name" value="PP2C"/>
</dbReference>
<dbReference type="InterPro" id="IPR000222">
    <property type="entry name" value="PP2C_BS"/>
</dbReference>
<dbReference type="InterPro" id="IPR036457">
    <property type="entry name" value="PPM-type-like_dom_sf"/>
</dbReference>
<dbReference type="InterPro" id="IPR001932">
    <property type="entry name" value="PPM-type_phosphatase-like_dom"/>
</dbReference>
<dbReference type="PANTHER" id="PTHR47992">
    <property type="entry name" value="PROTEIN PHOSPHATASE"/>
    <property type="match status" value="1"/>
</dbReference>
<dbReference type="Pfam" id="PF00481">
    <property type="entry name" value="PP2C"/>
    <property type="match status" value="1"/>
</dbReference>
<dbReference type="SMART" id="SM00331">
    <property type="entry name" value="PP2C_SIG"/>
    <property type="match status" value="1"/>
</dbReference>
<dbReference type="SMART" id="SM00332">
    <property type="entry name" value="PP2Cc"/>
    <property type="match status" value="1"/>
</dbReference>
<dbReference type="SUPFAM" id="SSF81606">
    <property type="entry name" value="PP2C-like"/>
    <property type="match status" value="1"/>
</dbReference>
<dbReference type="PROSITE" id="PS01032">
    <property type="entry name" value="PPM_1"/>
    <property type="match status" value="1"/>
</dbReference>
<dbReference type="PROSITE" id="PS51746">
    <property type="entry name" value="PPM_2"/>
    <property type="match status" value="1"/>
</dbReference>